<dbReference type="EMBL" id="BX950851">
    <property type="protein sequence ID" value="CAG77339.1"/>
    <property type="molecule type" value="Genomic_DNA"/>
</dbReference>
<dbReference type="RefSeq" id="WP_005976668.1">
    <property type="nucleotide sequence ID" value="NC_004547.2"/>
</dbReference>
<dbReference type="SMR" id="Q6CYR2"/>
<dbReference type="STRING" id="218491.ECA4443"/>
<dbReference type="GeneID" id="93392409"/>
<dbReference type="KEGG" id="eca:ECA4443"/>
<dbReference type="eggNOG" id="COG0230">
    <property type="taxonomic scope" value="Bacteria"/>
</dbReference>
<dbReference type="HOGENOM" id="CLU_129938_2_1_6"/>
<dbReference type="OrthoDB" id="9804164at2"/>
<dbReference type="Proteomes" id="UP000007966">
    <property type="component" value="Chromosome"/>
</dbReference>
<dbReference type="GO" id="GO:1990904">
    <property type="term" value="C:ribonucleoprotein complex"/>
    <property type="evidence" value="ECO:0007669"/>
    <property type="project" value="UniProtKB-KW"/>
</dbReference>
<dbReference type="GO" id="GO:0005840">
    <property type="term" value="C:ribosome"/>
    <property type="evidence" value="ECO:0007669"/>
    <property type="project" value="UniProtKB-KW"/>
</dbReference>
<dbReference type="GO" id="GO:0003735">
    <property type="term" value="F:structural constituent of ribosome"/>
    <property type="evidence" value="ECO:0007669"/>
    <property type="project" value="InterPro"/>
</dbReference>
<dbReference type="GO" id="GO:0006412">
    <property type="term" value="P:translation"/>
    <property type="evidence" value="ECO:0007669"/>
    <property type="project" value="UniProtKB-UniRule"/>
</dbReference>
<dbReference type="FunFam" id="1.10.287.3980:FF:000001">
    <property type="entry name" value="Mitochondrial ribosomal protein L34"/>
    <property type="match status" value="1"/>
</dbReference>
<dbReference type="Gene3D" id="1.10.287.3980">
    <property type="match status" value="1"/>
</dbReference>
<dbReference type="HAMAP" id="MF_00391">
    <property type="entry name" value="Ribosomal_bL34"/>
    <property type="match status" value="1"/>
</dbReference>
<dbReference type="InterPro" id="IPR000271">
    <property type="entry name" value="Ribosomal_bL34"/>
</dbReference>
<dbReference type="InterPro" id="IPR020939">
    <property type="entry name" value="Ribosomal_bL34_CS"/>
</dbReference>
<dbReference type="NCBIfam" id="TIGR01030">
    <property type="entry name" value="rpmH_bact"/>
    <property type="match status" value="1"/>
</dbReference>
<dbReference type="PANTHER" id="PTHR14503:SF4">
    <property type="entry name" value="LARGE RIBOSOMAL SUBUNIT PROTEIN BL34M"/>
    <property type="match status" value="1"/>
</dbReference>
<dbReference type="PANTHER" id="PTHR14503">
    <property type="entry name" value="MITOCHONDRIAL RIBOSOMAL PROTEIN 34 FAMILY MEMBER"/>
    <property type="match status" value="1"/>
</dbReference>
<dbReference type="Pfam" id="PF00468">
    <property type="entry name" value="Ribosomal_L34"/>
    <property type="match status" value="1"/>
</dbReference>
<dbReference type="PROSITE" id="PS00784">
    <property type="entry name" value="RIBOSOMAL_L34"/>
    <property type="match status" value="1"/>
</dbReference>
<comment type="similarity">
    <text evidence="1">Belongs to the bacterial ribosomal protein bL34 family.</text>
</comment>
<evidence type="ECO:0000255" key="1">
    <source>
        <dbReference type="HAMAP-Rule" id="MF_00391"/>
    </source>
</evidence>
<evidence type="ECO:0000305" key="2"/>
<accession>Q6CYR2</accession>
<sequence length="46" mass="5396">MKRTFQPSVLKRNRSHGFRARMATKNGRQVLARRRAKGRTRLSVSK</sequence>
<reference key="1">
    <citation type="journal article" date="2004" name="Proc. Natl. Acad. Sci. U.S.A.">
        <title>Genome sequence of the enterobacterial phytopathogen Erwinia carotovora subsp. atroseptica and characterization of virulence factors.</title>
        <authorList>
            <person name="Bell K.S."/>
            <person name="Sebaihia M."/>
            <person name="Pritchard L."/>
            <person name="Holden M.T.G."/>
            <person name="Hyman L.J."/>
            <person name="Holeva M.C."/>
            <person name="Thomson N.R."/>
            <person name="Bentley S.D."/>
            <person name="Churcher L.J.C."/>
            <person name="Mungall K."/>
            <person name="Atkin R."/>
            <person name="Bason N."/>
            <person name="Brooks K."/>
            <person name="Chillingworth T."/>
            <person name="Clark K."/>
            <person name="Doggett J."/>
            <person name="Fraser A."/>
            <person name="Hance Z."/>
            <person name="Hauser H."/>
            <person name="Jagels K."/>
            <person name="Moule S."/>
            <person name="Norbertczak H."/>
            <person name="Ormond D."/>
            <person name="Price C."/>
            <person name="Quail M.A."/>
            <person name="Sanders M."/>
            <person name="Walker D."/>
            <person name="Whitehead S."/>
            <person name="Salmond G.P.C."/>
            <person name="Birch P.R.J."/>
            <person name="Parkhill J."/>
            <person name="Toth I.K."/>
        </authorList>
    </citation>
    <scope>NUCLEOTIDE SEQUENCE [LARGE SCALE GENOMIC DNA]</scope>
    <source>
        <strain>SCRI 1043 / ATCC BAA-672</strain>
    </source>
</reference>
<gene>
    <name evidence="1" type="primary">rpmH</name>
    <name type="ordered locus">ECA4443</name>
</gene>
<protein>
    <recommendedName>
        <fullName evidence="1">Large ribosomal subunit protein bL34</fullName>
    </recommendedName>
    <alternativeName>
        <fullName evidence="2">50S ribosomal protein L34</fullName>
    </alternativeName>
</protein>
<feature type="chain" id="PRO_0000187383" description="Large ribosomal subunit protein bL34">
    <location>
        <begin position="1"/>
        <end position="46"/>
    </location>
</feature>
<name>RL34_PECAS</name>
<keyword id="KW-1185">Reference proteome</keyword>
<keyword id="KW-0687">Ribonucleoprotein</keyword>
<keyword id="KW-0689">Ribosomal protein</keyword>
<organism>
    <name type="scientific">Pectobacterium atrosepticum (strain SCRI 1043 / ATCC BAA-672)</name>
    <name type="common">Erwinia carotovora subsp. atroseptica</name>
    <dbReference type="NCBI Taxonomy" id="218491"/>
    <lineage>
        <taxon>Bacteria</taxon>
        <taxon>Pseudomonadati</taxon>
        <taxon>Pseudomonadota</taxon>
        <taxon>Gammaproteobacteria</taxon>
        <taxon>Enterobacterales</taxon>
        <taxon>Pectobacteriaceae</taxon>
        <taxon>Pectobacterium</taxon>
    </lineage>
</organism>
<proteinExistence type="inferred from homology"/>